<feature type="chain" id="PRO_0000088907" description="Actin, gamma">
    <location>
        <begin position="1"/>
        <end position="375"/>
    </location>
</feature>
<evidence type="ECO:0000250" key="1">
    <source>
        <dbReference type="UniProtKB" id="P60010"/>
    </source>
</evidence>
<evidence type="ECO:0000305" key="2"/>
<dbReference type="EC" id="3.6.4.-" evidence="1"/>
<dbReference type="EMBL" id="AF056976">
    <property type="protein sequence ID" value="AAF00008.1"/>
    <property type="molecule type" value="Genomic_DNA"/>
</dbReference>
<dbReference type="SMR" id="Q9UVW9"/>
<dbReference type="GO" id="GO:0005737">
    <property type="term" value="C:cytoplasm"/>
    <property type="evidence" value="ECO:0007669"/>
    <property type="project" value="UniProtKB-KW"/>
</dbReference>
<dbReference type="GO" id="GO:0005856">
    <property type="term" value="C:cytoskeleton"/>
    <property type="evidence" value="ECO:0007669"/>
    <property type="project" value="UniProtKB-SubCell"/>
</dbReference>
<dbReference type="GO" id="GO:0005524">
    <property type="term" value="F:ATP binding"/>
    <property type="evidence" value="ECO:0007669"/>
    <property type="project" value="UniProtKB-KW"/>
</dbReference>
<dbReference type="GO" id="GO:0016787">
    <property type="term" value="F:hydrolase activity"/>
    <property type="evidence" value="ECO:0007669"/>
    <property type="project" value="UniProtKB-KW"/>
</dbReference>
<dbReference type="CDD" id="cd10224">
    <property type="entry name" value="ASKHA_NBD_actin"/>
    <property type="match status" value="1"/>
</dbReference>
<dbReference type="FunFam" id="2.30.36.70:FF:000001">
    <property type="entry name" value="Actin, alpha skeletal muscle"/>
    <property type="match status" value="1"/>
</dbReference>
<dbReference type="FunFam" id="3.30.420.40:FF:000291">
    <property type="entry name" value="Actin, alpha skeletal muscle"/>
    <property type="match status" value="1"/>
</dbReference>
<dbReference type="FunFam" id="3.90.640.10:FF:000001">
    <property type="entry name" value="Actin, muscle"/>
    <property type="match status" value="1"/>
</dbReference>
<dbReference type="FunFam" id="3.30.420.40:FF:000404">
    <property type="entry name" value="Major actin"/>
    <property type="match status" value="1"/>
</dbReference>
<dbReference type="FunFam" id="3.30.420.40:FF:000058">
    <property type="entry name" value="Putative actin-related protein 5"/>
    <property type="match status" value="1"/>
</dbReference>
<dbReference type="Gene3D" id="3.30.420.40">
    <property type="match status" value="2"/>
</dbReference>
<dbReference type="Gene3D" id="3.90.640.10">
    <property type="entry name" value="Actin, Chain A, domain 4"/>
    <property type="match status" value="1"/>
</dbReference>
<dbReference type="InterPro" id="IPR004000">
    <property type="entry name" value="Actin"/>
</dbReference>
<dbReference type="InterPro" id="IPR020902">
    <property type="entry name" value="Actin/actin-like_CS"/>
</dbReference>
<dbReference type="InterPro" id="IPR004001">
    <property type="entry name" value="Actin_CS"/>
</dbReference>
<dbReference type="InterPro" id="IPR043129">
    <property type="entry name" value="ATPase_NBD"/>
</dbReference>
<dbReference type="PANTHER" id="PTHR11937">
    <property type="entry name" value="ACTIN"/>
    <property type="match status" value="1"/>
</dbReference>
<dbReference type="Pfam" id="PF00022">
    <property type="entry name" value="Actin"/>
    <property type="match status" value="1"/>
</dbReference>
<dbReference type="PRINTS" id="PR00190">
    <property type="entry name" value="ACTIN"/>
</dbReference>
<dbReference type="SMART" id="SM00268">
    <property type="entry name" value="ACTIN"/>
    <property type="match status" value="1"/>
</dbReference>
<dbReference type="SUPFAM" id="SSF53067">
    <property type="entry name" value="Actin-like ATPase domain"/>
    <property type="match status" value="2"/>
</dbReference>
<dbReference type="PROSITE" id="PS00406">
    <property type="entry name" value="ACTINS_1"/>
    <property type="match status" value="1"/>
</dbReference>
<dbReference type="PROSITE" id="PS00432">
    <property type="entry name" value="ACTINS_2"/>
    <property type="match status" value="1"/>
</dbReference>
<dbReference type="PROSITE" id="PS01132">
    <property type="entry name" value="ACTINS_ACT_LIKE"/>
    <property type="match status" value="1"/>
</dbReference>
<keyword id="KW-0067">ATP-binding</keyword>
<keyword id="KW-0963">Cytoplasm</keyword>
<keyword id="KW-0206">Cytoskeleton</keyword>
<keyword id="KW-0378">Hydrolase</keyword>
<keyword id="KW-0547">Nucleotide-binding</keyword>
<comment type="function">
    <text>Actins are highly conserved proteins that are involved in various types of cell motility and are ubiquitously expressed in all eukaryotic cells.</text>
</comment>
<comment type="catalytic activity">
    <reaction evidence="1">
        <text>ATP + H2O = ADP + phosphate + H(+)</text>
        <dbReference type="Rhea" id="RHEA:13065"/>
        <dbReference type="ChEBI" id="CHEBI:15377"/>
        <dbReference type="ChEBI" id="CHEBI:15378"/>
        <dbReference type="ChEBI" id="CHEBI:30616"/>
        <dbReference type="ChEBI" id="CHEBI:43474"/>
        <dbReference type="ChEBI" id="CHEBI:456216"/>
    </reaction>
</comment>
<comment type="subcellular location">
    <subcellularLocation>
        <location>Cytoplasm</location>
        <location>Cytoskeleton</location>
    </subcellularLocation>
</comment>
<comment type="similarity">
    <text evidence="2">Belongs to the actin family.</text>
</comment>
<protein>
    <recommendedName>
        <fullName>Actin, gamma</fullName>
        <ecNumber evidence="1">3.6.4.-</ecNumber>
    </recommendedName>
</protein>
<reference key="1">
    <citation type="journal article" date="2000" name="Appl. Microbiol. Biotechnol.">
        <title>The gene encoding gamma-actin from the cephalosporin producer Acremonium chrysogenum.</title>
        <authorList>
            <person name="Diez B."/>
            <person name="Velasco J."/>
            <person name="Marcos A.T."/>
            <person name="Rodriguez M."/>
            <person name="de la Fuente J.L."/>
            <person name="Barredo J.L."/>
        </authorList>
    </citation>
    <scope>NUCLEOTIDE SEQUENCE [GENOMIC DNA]</scope>
</reference>
<organism>
    <name type="scientific">Hapsidospora chrysogena</name>
    <name type="common">Acremonium chrysogenum</name>
    <dbReference type="NCBI Taxonomy" id="5044"/>
    <lineage>
        <taxon>Eukaryota</taxon>
        <taxon>Fungi</taxon>
        <taxon>Dikarya</taxon>
        <taxon>Ascomycota</taxon>
        <taxon>Pezizomycotina</taxon>
        <taxon>Sordariomycetes</taxon>
        <taxon>Hypocreomycetidae</taxon>
        <taxon>Hypocreales</taxon>
        <taxon>Bionectriaceae</taxon>
        <taxon>Hapsidospora</taxon>
    </lineage>
</organism>
<proteinExistence type="inferred from homology"/>
<gene>
    <name type="primary">ACT</name>
</gene>
<accession>Q9UVW9</accession>
<name>ACTG_HAPCH</name>
<sequence length="375" mass="41608">MEEEVAALVIDNGSGMCKAGFAGDDAPRAVFPSIVGRPRHHGIMIGMGQKDSYVGDEAQSKRGILTLRYPIEHGVVTNWDDMEKIWHHTFYNELRVAPEEHPVLLTEAPINPKSNREKMTQIVFETFNAPAFYVSIQAVLSLYASGRTTGIVLDSGDGVTHVVPIYEGFALPHAIARVDMAGRDLTDYLMKILAERGYTFSTTAEREIVRDIKEKLCYVALDFEQEIQTAAQSSSLEKSYELPDGQVITIGNERFRAPEALFQPSVLGLESGGIHVTTFNSIMKCDVDVRKDLYGNIVMSGGTTMYPGLSDRMQKEITALAPSSMKVKIIAPPERKYSVWIGGSILASLSTFQQMWISKQEYDESGPSIVHRKCF</sequence>